<accession>Q4UU40</accession>
<comment type="function">
    <text evidence="1">Catalyzes the sequential NAD-dependent oxidations of L-histidinol to L-histidinaldehyde and then to L-histidine.</text>
</comment>
<comment type="catalytic activity">
    <reaction evidence="1">
        <text>L-histidinol + 2 NAD(+) + H2O = L-histidine + 2 NADH + 3 H(+)</text>
        <dbReference type="Rhea" id="RHEA:20641"/>
        <dbReference type="ChEBI" id="CHEBI:15377"/>
        <dbReference type="ChEBI" id="CHEBI:15378"/>
        <dbReference type="ChEBI" id="CHEBI:57540"/>
        <dbReference type="ChEBI" id="CHEBI:57595"/>
        <dbReference type="ChEBI" id="CHEBI:57699"/>
        <dbReference type="ChEBI" id="CHEBI:57945"/>
        <dbReference type="EC" id="1.1.1.23"/>
    </reaction>
</comment>
<comment type="cofactor">
    <cofactor evidence="1">
        <name>Zn(2+)</name>
        <dbReference type="ChEBI" id="CHEBI:29105"/>
    </cofactor>
    <text evidence="1">Binds 1 zinc ion per subunit.</text>
</comment>
<comment type="pathway">
    <text evidence="1">Amino-acid biosynthesis; L-histidine biosynthesis; L-histidine from 5-phospho-alpha-D-ribose 1-diphosphate: step 9/9.</text>
</comment>
<comment type="similarity">
    <text evidence="1">Belongs to the histidinol dehydrogenase family.</text>
</comment>
<sequence>MNTLDWTQLTADARTQALTRPVQTVATQTREAVATLIADVRARGDVALREITARFDGVTLDSFAVSEAEFAAADAAIAPELRQAMQDAVARIDTFHRAGMSEGYAVETAPGVVCEKIVRPIGRVGLYVPAGSAPLPSTALMLGVPARLAGCREVVLCTPPRKDGSVDPAVLVAAQLTGVRRVFKLGGAQAIAAMAYGTDSIPSCDKLFGPGNSFVTEAKQQVAQSGAAAIDMPAGPSEVLVIADAGAQPAFVAADLLSQAEHGPDSQVLLLSDSDALIAAVQEQLDLQLAQLSRADIARQALAQSRLIKVATLQEAFEISNRYAPEHLILALREPRAWLAQVEAAGSVFLGDYTPEALGDYCSGTNHVLPTSGAARAYSGVSVASFQNMVSVQAASKAGIDGIGACALILARAEGLDAHANAVALRMGVAA</sequence>
<feature type="chain" id="PRO_0000135882" description="Histidinol dehydrogenase">
    <location>
        <begin position="1"/>
        <end position="431"/>
    </location>
</feature>
<feature type="active site" description="Proton acceptor" evidence="1">
    <location>
        <position position="326"/>
    </location>
</feature>
<feature type="active site" description="Proton acceptor" evidence="1">
    <location>
        <position position="327"/>
    </location>
</feature>
<feature type="binding site" evidence="1">
    <location>
        <position position="127"/>
    </location>
    <ligand>
        <name>NAD(+)</name>
        <dbReference type="ChEBI" id="CHEBI:57540"/>
    </ligand>
</feature>
<feature type="binding site" evidence="1">
    <location>
        <position position="189"/>
    </location>
    <ligand>
        <name>NAD(+)</name>
        <dbReference type="ChEBI" id="CHEBI:57540"/>
    </ligand>
</feature>
<feature type="binding site" evidence="1">
    <location>
        <position position="212"/>
    </location>
    <ligand>
        <name>NAD(+)</name>
        <dbReference type="ChEBI" id="CHEBI:57540"/>
    </ligand>
</feature>
<feature type="binding site" evidence="1">
    <location>
        <position position="237"/>
    </location>
    <ligand>
        <name>substrate</name>
    </ligand>
</feature>
<feature type="binding site" evidence="1">
    <location>
        <position position="259"/>
    </location>
    <ligand>
        <name>substrate</name>
    </ligand>
</feature>
<feature type="binding site" evidence="1">
    <location>
        <position position="259"/>
    </location>
    <ligand>
        <name>Zn(2+)</name>
        <dbReference type="ChEBI" id="CHEBI:29105"/>
    </ligand>
</feature>
<feature type="binding site" evidence="1">
    <location>
        <position position="262"/>
    </location>
    <ligand>
        <name>substrate</name>
    </ligand>
</feature>
<feature type="binding site" evidence="1">
    <location>
        <position position="262"/>
    </location>
    <ligand>
        <name>Zn(2+)</name>
        <dbReference type="ChEBI" id="CHEBI:29105"/>
    </ligand>
</feature>
<feature type="binding site" evidence="1">
    <location>
        <position position="327"/>
    </location>
    <ligand>
        <name>substrate</name>
    </ligand>
</feature>
<feature type="binding site" evidence="1">
    <location>
        <position position="360"/>
    </location>
    <ligand>
        <name>substrate</name>
    </ligand>
</feature>
<feature type="binding site" evidence="1">
    <location>
        <position position="360"/>
    </location>
    <ligand>
        <name>Zn(2+)</name>
        <dbReference type="ChEBI" id="CHEBI:29105"/>
    </ligand>
</feature>
<feature type="binding site" evidence="1">
    <location>
        <position position="414"/>
    </location>
    <ligand>
        <name>substrate</name>
    </ligand>
</feature>
<feature type="binding site" evidence="1">
    <location>
        <position position="419"/>
    </location>
    <ligand>
        <name>substrate</name>
    </ligand>
</feature>
<feature type="binding site" evidence="1">
    <location>
        <position position="419"/>
    </location>
    <ligand>
        <name>Zn(2+)</name>
        <dbReference type="ChEBI" id="CHEBI:29105"/>
    </ligand>
</feature>
<name>HISX_XANC8</name>
<evidence type="ECO:0000255" key="1">
    <source>
        <dbReference type="HAMAP-Rule" id="MF_01024"/>
    </source>
</evidence>
<keyword id="KW-0028">Amino-acid biosynthesis</keyword>
<keyword id="KW-0368">Histidine biosynthesis</keyword>
<keyword id="KW-0479">Metal-binding</keyword>
<keyword id="KW-0520">NAD</keyword>
<keyword id="KW-0560">Oxidoreductase</keyword>
<keyword id="KW-0862">Zinc</keyword>
<dbReference type="EC" id="1.1.1.23" evidence="1"/>
<dbReference type="EMBL" id="CP000050">
    <property type="protein sequence ID" value="AAY49433.1"/>
    <property type="molecule type" value="Genomic_DNA"/>
</dbReference>
<dbReference type="RefSeq" id="WP_011269812.1">
    <property type="nucleotide sequence ID" value="NZ_CP155948.1"/>
</dbReference>
<dbReference type="SMR" id="Q4UU40"/>
<dbReference type="KEGG" id="xcb:XC_2380"/>
<dbReference type="HOGENOM" id="CLU_006732_3_0_6"/>
<dbReference type="UniPathway" id="UPA00031">
    <property type="reaction ID" value="UER00014"/>
</dbReference>
<dbReference type="Proteomes" id="UP000000420">
    <property type="component" value="Chromosome"/>
</dbReference>
<dbReference type="GO" id="GO:0005829">
    <property type="term" value="C:cytosol"/>
    <property type="evidence" value="ECO:0007669"/>
    <property type="project" value="TreeGrafter"/>
</dbReference>
<dbReference type="GO" id="GO:0004399">
    <property type="term" value="F:histidinol dehydrogenase activity"/>
    <property type="evidence" value="ECO:0007669"/>
    <property type="project" value="UniProtKB-UniRule"/>
</dbReference>
<dbReference type="GO" id="GO:0051287">
    <property type="term" value="F:NAD binding"/>
    <property type="evidence" value="ECO:0007669"/>
    <property type="project" value="InterPro"/>
</dbReference>
<dbReference type="GO" id="GO:0008270">
    <property type="term" value="F:zinc ion binding"/>
    <property type="evidence" value="ECO:0007669"/>
    <property type="project" value="UniProtKB-UniRule"/>
</dbReference>
<dbReference type="GO" id="GO:0000105">
    <property type="term" value="P:L-histidine biosynthetic process"/>
    <property type="evidence" value="ECO:0007669"/>
    <property type="project" value="UniProtKB-UniRule"/>
</dbReference>
<dbReference type="CDD" id="cd06572">
    <property type="entry name" value="Histidinol_dh"/>
    <property type="match status" value="1"/>
</dbReference>
<dbReference type="FunFam" id="3.40.50.1980:FF:000001">
    <property type="entry name" value="Histidinol dehydrogenase"/>
    <property type="match status" value="1"/>
</dbReference>
<dbReference type="Gene3D" id="1.20.5.1300">
    <property type="match status" value="1"/>
</dbReference>
<dbReference type="Gene3D" id="3.40.50.1980">
    <property type="entry name" value="Nitrogenase molybdenum iron protein domain"/>
    <property type="match status" value="2"/>
</dbReference>
<dbReference type="HAMAP" id="MF_01024">
    <property type="entry name" value="HisD"/>
    <property type="match status" value="1"/>
</dbReference>
<dbReference type="InterPro" id="IPR016161">
    <property type="entry name" value="Ald_DH/histidinol_DH"/>
</dbReference>
<dbReference type="InterPro" id="IPR001692">
    <property type="entry name" value="Histidinol_DH_CS"/>
</dbReference>
<dbReference type="InterPro" id="IPR022695">
    <property type="entry name" value="Histidinol_DH_monofunct"/>
</dbReference>
<dbReference type="InterPro" id="IPR012131">
    <property type="entry name" value="Hstdl_DH"/>
</dbReference>
<dbReference type="NCBIfam" id="TIGR00069">
    <property type="entry name" value="hisD"/>
    <property type="match status" value="1"/>
</dbReference>
<dbReference type="PANTHER" id="PTHR21256:SF2">
    <property type="entry name" value="HISTIDINE BIOSYNTHESIS TRIFUNCTIONAL PROTEIN"/>
    <property type="match status" value="1"/>
</dbReference>
<dbReference type="PANTHER" id="PTHR21256">
    <property type="entry name" value="HISTIDINOL DEHYDROGENASE HDH"/>
    <property type="match status" value="1"/>
</dbReference>
<dbReference type="Pfam" id="PF00815">
    <property type="entry name" value="Histidinol_dh"/>
    <property type="match status" value="1"/>
</dbReference>
<dbReference type="PIRSF" id="PIRSF000099">
    <property type="entry name" value="Histidinol_dh"/>
    <property type="match status" value="1"/>
</dbReference>
<dbReference type="PRINTS" id="PR00083">
    <property type="entry name" value="HOLDHDRGNASE"/>
</dbReference>
<dbReference type="SUPFAM" id="SSF53720">
    <property type="entry name" value="ALDH-like"/>
    <property type="match status" value="1"/>
</dbReference>
<dbReference type="PROSITE" id="PS00611">
    <property type="entry name" value="HISOL_DEHYDROGENASE"/>
    <property type="match status" value="1"/>
</dbReference>
<proteinExistence type="inferred from homology"/>
<organism>
    <name type="scientific">Xanthomonas campestris pv. campestris (strain 8004)</name>
    <dbReference type="NCBI Taxonomy" id="314565"/>
    <lineage>
        <taxon>Bacteria</taxon>
        <taxon>Pseudomonadati</taxon>
        <taxon>Pseudomonadota</taxon>
        <taxon>Gammaproteobacteria</taxon>
        <taxon>Lysobacterales</taxon>
        <taxon>Lysobacteraceae</taxon>
        <taxon>Xanthomonas</taxon>
    </lineage>
</organism>
<gene>
    <name evidence="1" type="primary">hisD</name>
    <name type="ordered locus">XC_2380</name>
</gene>
<protein>
    <recommendedName>
        <fullName evidence="1">Histidinol dehydrogenase</fullName>
        <shortName evidence="1">HDH</shortName>
        <ecNumber evidence="1">1.1.1.23</ecNumber>
    </recommendedName>
</protein>
<reference key="1">
    <citation type="journal article" date="2005" name="Genome Res.">
        <title>Comparative and functional genomic analyses of the pathogenicity of phytopathogen Xanthomonas campestris pv. campestris.</title>
        <authorList>
            <person name="Qian W."/>
            <person name="Jia Y."/>
            <person name="Ren S.-X."/>
            <person name="He Y.-Q."/>
            <person name="Feng J.-X."/>
            <person name="Lu L.-F."/>
            <person name="Sun Q."/>
            <person name="Ying G."/>
            <person name="Tang D.-J."/>
            <person name="Tang H."/>
            <person name="Wu W."/>
            <person name="Hao P."/>
            <person name="Wang L."/>
            <person name="Jiang B.-L."/>
            <person name="Zeng S."/>
            <person name="Gu W.-Y."/>
            <person name="Lu G."/>
            <person name="Rong L."/>
            <person name="Tian Y."/>
            <person name="Yao Z."/>
            <person name="Fu G."/>
            <person name="Chen B."/>
            <person name="Fang R."/>
            <person name="Qiang B."/>
            <person name="Chen Z."/>
            <person name="Zhao G.-P."/>
            <person name="Tang J.-L."/>
            <person name="He C."/>
        </authorList>
    </citation>
    <scope>NUCLEOTIDE SEQUENCE [LARGE SCALE GENOMIC DNA]</scope>
    <source>
        <strain>8004</strain>
    </source>
</reference>